<proteinExistence type="inferred from homology"/>
<evidence type="ECO:0000250" key="1">
    <source>
        <dbReference type="UniProtKB" id="Q18012"/>
    </source>
</evidence>
<evidence type="ECO:0000250" key="2">
    <source>
        <dbReference type="UniProtKB" id="Q9BUW7"/>
    </source>
</evidence>
<evidence type="ECO:0000255" key="3"/>
<evidence type="ECO:0000256" key="4">
    <source>
        <dbReference type="SAM" id="MobiDB-lite"/>
    </source>
</evidence>
<evidence type="ECO:0000305" key="5"/>
<reference key="1">
    <citation type="journal article" date="2006" name="Proc. Natl. Acad. Sci. U.S.A.">
        <title>A molecular neuroethological approach for identifying and characterizing a cascade of behaviorally regulated genes.</title>
        <authorList>
            <person name="Wada K."/>
            <person name="Howard J.T."/>
            <person name="McConnell P."/>
            <person name="Whitney O."/>
            <person name="Lints T."/>
            <person name="Rivas M.V."/>
            <person name="Horita H."/>
            <person name="Patterson M.A."/>
            <person name="White S.A."/>
            <person name="Scharff C."/>
            <person name="Haesler S."/>
            <person name="Zhao S."/>
            <person name="Sakaguchi H."/>
            <person name="Hagiwara M."/>
            <person name="Shiraki T."/>
            <person name="Hirozane-Kishikawa T."/>
            <person name="Skene P."/>
            <person name="Hayashizaki Y."/>
            <person name="Carninci P."/>
            <person name="Jarvis E.D."/>
        </authorList>
    </citation>
    <scope>NUCLEOTIDE SEQUENCE [LARGE SCALE MRNA]</scope>
    <source>
        <tissue>Brain</tissue>
    </source>
</reference>
<dbReference type="EMBL" id="DQ213859">
    <property type="protein sequence ID" value="ACH44004.1"/>
    <property type="molecule type" value="mRNA"/>
</dbReference>
<dbReference type="EMBL" id="DQ213860">
    <property type="protein sequence ID" value="ACH44005.1"/>
    <property type="molecule type" value="mRNA"/>
</dbReference>
<dbReference type="SMR" id="B5FY93"/>
<dbReference type="STRING" id="59729.ENSTGUP00000037573"/>
<dbReference type="GeneID" id="100190124"/>
<dbReference type="KEGG" id="tgu:100190124"/>
<dbReference type="CTD" id="79095"/>
<dbReference type="HOGENOM" id="CLU_167244_0_0_1"/>
<dbReference type="InParanoid" id="B5FY93"/>
<dbReference type="OrthoDB" id="10050612at2759"/>
<dbReference type="TreeFam" id="TF324640"/>
<dbReference type="Proteomes" id="UP000007754">
    <property type="component" value="Unplaced"/>
</dbReference>
<dbReference type="GO" id="GO:0070161">
    <property type="term" value="C:anchoring junction"/>
    <property type="evidence" value="ECO:0007669"/>
    <property type="project" value="UniProtKB-SubCell"/>
</dbReference>
<dbReference type="GO" id="GO:0030054">
    <property type="term" value="C:cell junction"/>
    <property type="evidence" value="ECO:0000250"/>
    <property type="project" value="UniProtKB"/>
</dbReference>
<dbReference type="GO" id="GO:0005737">
    <property type="term" value="C:cytoplasm"/>
    <property type="evidence" value="ECO:0007669"/>
    <property type="project" value="UniProtKB-KW"/>
</dbReference>
<dbReference type="GO" id="GO:0005856">
    <property type="term" value="C:cytoskeleton"/>
    <property type="evidence" value="ECO:0007669"/>
    <property type="project" value="UniProtKB-SubCell"/>
</dbReference>
<dbReference type="GO" id="GO:0120219">
    <property type="term" value="C:subapical part of cell"/>
    <property type="evidence" value="ECO:0000250"/>
    <property type="project" value="UniProtKB"/>
</dbReference>
<dbReference type="GO" id="GO:0060090">
    <property type="term" value="F:molecular adaptor activity"/>
    <property type="evidence" value="ECO:0000250"/>
    <property type="project" value="UniProtKB"/>
</dbReference>
<dbReference type="GO" id="GO:0045110">
    <property type="term" value="P:intermediate filament bundle assembly"/>
    <property type="evidence" value="ECO:0000250"/>
    <property type="project" value="UniProtKB"/>
</dbReference>
<dbReference type="InterPro" id="IPR005374">
    <property type="entry name" value="BBLN_eukaryota"/>
</dbReference>
<dbReference type="PANTHER" id="PTHR34344:SF1">
    <property type="entry name" value="BUBLIN COILED-COIL PROTEIN"/>
    <property type="match status" value="1"/>
</dbReference>
<dbReference type="PANTHER" id="PTHR34344">
    <property type="entry name" value="UPF0184 PROTEIN C9ORF16"/>
    <property type="match status" value="1"/>
</dbReference>
<dbReference type="Pfam" id="PF03670">
    <property type="entry name" value="UPF0184"/>
    <property type="match status" value="1"/>
</dbReference>
<name>BBLN_TAEGU</name>
<sequence length="93" mass="10121">MAGPNGDPHVLGGGTGDEGDEGGDTFEEEEYAAINSMLDQINSCLDHLEEKNDHLHICLKELLESNRQTRLEFQQQSKQLNTGADVQGSQPPA</sequence>
<organism>
    <name type="scientific">Taeniopygia guttata</name>
    <name type="common">Zebra finch</name>
    <name type="synonym">Poephila guttata</name>
    <dbReference type="NCBI Taxonomy" id="59729"/>
    <lineage>
        <taxon>Eukaryota</taxon>
        <taxon>Metazoa</taxon>
        <taxon>Chordata</taxon>
        <taxon>Craniata</taxon>
        <taxon>Vertebrata</taxon>
        <taxon>Euteleostomi</taxon>
        <taxon>Archelosauria</taxon>
        <taxon>Archosauria</taxon>
        <taxon>Dinosauria</taxon>
        <taxon>Saurischia</taxon>
        <taxon>Theropoda</taxon>
        <taxon>Coelurosauria</taxon>
        <taxon>Aves</taxon>
        <taxon>Neognathae</taxon>
        <taxon>Neoaves</taxon>
        <taxon>Telluraves</taxon>
        <taxon>Australaves</taxon>
        <taxon>Passeriformes</taxon>
        <taxon>Passeroidea</taxon>
        <taxon>Estrildidae</taxon>
        <taxon>Estrildinae</taxon>
        <taxon>Taeniopygia</taxon>
    </lineage>
</organism>
<comment type="function">
    <text evidence="1">Essential for intermediate filament organization in intestinal cells, interacts with intermediate filament and regulates intestinal lumen morphology.</text>
</comment>
<comment type="subcellular location">
    <subcellularLocation>
        <location evidence="2">Cell junction</location>
    </subcellularLocation>
    <subcellularLocation>
        <location evidence="2">Cytoplasm</location>
        <location evidence="2">Cytoskeleton</location>
    </subcellularLocation>
    <text evidence="2">In the intestine, localizes subapically and at cell junctions. Interacts with intermediate filament (IF) proteins and localizes to the IF network in an IF-dependent manner. In dividing cells, localizes to interpolar and kinetochore microtubules.</text>
</comment>
<comment type="similarity">
    <text evidence="5">Belongs to the UPF0184 (EST00098) family.</text>
</comment>
<feature type="chain" id="PRO_0000365073" description="Bublin coiled-coil protein">
    <location>
        <begin position="1"/>
        <end position="93"/>
    </location>
</feature>
<feature type="region of interest" description="Disordered" evidence="4">
    <location>
        <begin position="1"/>
        <end position="26"/>
    </location>
</feature>
<feature type="region of interest" description="Disordered" evidence="4">
    <location>
        <begin position="74"/>
        <end position="93"/>
    </location>
</feature>
<feature type="coiled-coil region" evidence="3">
    <location>
        <begin position="59"/>
        <end position="80"/>
    </location>
</feature>
<feature type="compositionally biased region" description="Acidic residues" evidence="4">
    <location>
        <begin position="17"/>
        <end position="26"/>
    </location>
</feature>
<protein>
    <recommendedName>
        <fullName evidence="2">Bublin coiled-coil protein</fullName>
    </recommendedName>
    <alternativeName>
        <fullName>UPF0184 protein C9orf16 homolog</fullName>
    </alternativeName>
</protein>
<gene>
    <name type="primary">BBLN</name>
</gene>
<accession>B5FY93</accession>
<keyword id="KW-0965">Cell junction</keyword>
<keyword id="KW-0175">Coiled coil</keyword>
<keyword id="KW-0963">Cytoplasm</keyword>
<keyword id="KW-0206">Cytoskeleton</keyword>
<keyword id="KW-1185">Reference proteome</keyword>